<dbReference type="EC" id="4.1.1.48" evidence="1"/>
<dbReference type="EMBL" id="CP000487">
    <property type="protein sequence ID" value="ABK82705.1"/>
    <property type="molecule type" value="Genomic_DNA"/>
</dbReference>
<dbReference type="RefSeq" id="WP_002849050.1">
    <property type="nucleotide sequence ID" value="NC_008599.1"/>
</dbReference>
<dbReference type="SMR" id="A0RNN3"/>
<dbReference type="GeneID" id="61064485"/>
<dbReference type="KEGG" id="cff:CFF8240_0640"/>
<dbReference type="eggNOG" id="COG0134">
    <property type="taxonomic scope" value="Bacteria"/>
</dbReference>
<dbReference type="HOGENOM" id="CLU_034247_2_0_7"/>
<dbReference type="UniPathway" id="UPA00035">
    <property type="reaction ID" value="UER00043"/>
</dbReference>
<dbReference type="Proteomes" id="UP000000760">
    <property type="component" value="Chromosome"/>
</dbReference>
<dbReference type="GO" id="GO:0004425">
    <property type="term" value="F:indole-3-glycerol-phosphate synthase activity"/>
    <property type="evidence" value="ECO:0007669"/>
    <property type="project" value="UniProtKB-UniRule"/>
</dbReference>
<dbReference type="GO" id="GO:0004640">
    <property type="term" value="F:phosphoribosylanthranilate isomerase activity"/>
    <property type="evidence" value="ECO:0007669"/>
    <property type="project" value="TreeGrafter"/>
</dbReference>
<dbReference type="GO" id="GO:0000162">
    <property type="term" value="P:L-tryptophan biosynthetic process"/>
    <property type="evidence" value="ECO:0007669"/>
    <property type="project" value="UniProtKB-UniRule"/>
</dbReference>
<dbReference type="CDD" id="cd00331">
    <property type="entry name" value="IGPS"/>
    <property type="match status" value="1"/>
</dbReference>
<dbReference type="FunFam" id="3.20.20.70:FF:000024">
    <property type="entry name" value="Indole-3-glycerol phosphate synthase"/>
    <property type="match status" value="1"/>
</dbReference>
<dbReference type="Gene3D" id="3.20.20.70">
    <property type="entry name" value="Aldolase class I"/>
    <property type="match status" value="1"/>
</dbReference>
<dbReference type="HAMAP" id="MF_00134_B">
    <property type="entry name" value="IGPS_B"/>
    <property type="match status" value="1"/>
</dbReference>
<dbReference type="InterPro" id="IPR013785">
    <property type="entry name" value="Aldolase_TIM"/>
</dbReference>
<dbReference type="InterPro" id="IPR045186">
    <property type="entry name" value="Indole-3-glycerol_P_synth"/>
</dbReference>
<dbReference type="InterPro" id="IPR013798">
    <property type="entry name" value="Indole-3-glycerol_P_synth_dom"/>
</dbReference>
<dbReference type="InterPro" id="IPR001468">
    <property type="entry name" value="Indole-3-GlycerolPSynthase_CS"/>
</dbReference>
<dbReference type="InterPro" id="IPR011060">
    <property type="entry name" value="RibuloseP-bd_barrel"/>
</dbReference>
<dbReference type="NCBIfam" id="NF001377">
    <property type="entry name" value="PRK00278.2-4"/>
    <property type="match status" value="1"/>
</dbReference>
<dbReference type="NCBIfam" id="NF001378">
    <property type="entry name" value="PRK00278.2-5"/>
    <property type="match status" value="1"/>
</dbReference>
<dbReference type="PANTHER" id="PTHR22854:SF2">
    <property type="entry name" value="INDOLE-3-GLYCEROL-PHOSPHATE SYNTHASE"/>
    <property type="match status" value="1"/>
</dbReference>
<dbReference type="PANTHER" id="PTHR22854">
    <property type="entry name" value="TRYPTOPHAN BIOSYNTHESIS PROTEIN"/>
    <property type="match status" value="1"/>
</dbReference>
<dbReference type="Pfam" id="PF00218">
    <property type="entry name" value="IGPS"/>
    <property type="match status" value="1"/>
</dbReference>
<dbReference type="SUPFAM" id="SSF51366">
    <property type="entry name" value="Ribulose-phoshate binding barrel"/>
    <property type="match status" value="1"/>
</dbReference>
<dbReference type="PROSITE" id="PS00614">
    <property type="entry name" value="IGPS"/>
    <property type="match status" value="1"/>
</dbReference>
<protein>
    <recommendedName>
        <fullName evidence="1">Indole-3-glycerol phosphate synthase</fullName>
        <shortName evidence="1">IGPS</shortName>
        <ecNumber evidence="1">4.1.1.48</ecNumber>
    </recommendedName>
</protein>
<reference key="1">
    <citation type="submission" date="2006-11" db="EMBL/GenBank/DDBJ databases">
        <title>Sequence of Campylobacter fetus subsp. fetus 82-40.</title>
        <authorList>
            <person name="Fouts D.E."/>
            <person name="Nelson K.E."/>
        </authorList>
    </citation>
    <scope>NUCLEOTIDE SEQUENCE [LARGE SCALE GENOMIC DNA]</scope>
    <source>
        <strain>82-40</strain>
    </source>
</reference>
<evidence type="ECO:0000255" key="1">
    <source>
        <dbReference type="HAMAP-Rule" id="MF_00134"/>
    </source>
</evidence>
<sequence length="258" mass="29506">MILDEIISKTKINLENIKENLPLCRLENALTNSYIPRDVKQVLKQKNSINIIAEIKKASPSKGVIKEDFDPLKIAFEYEKAGVSAFSILTEPFYFQGSLEYIALVRRYTNTPILRKDFIVDIYQIAEARLYGADFILLIAKALDKFYLKTLFEYAKSLNLEVLMEIHDETDLEKALFVDADIIGINHRNLQTFDMDMELCIKLIPLIPSGKIIVAESGLYNNSELINLKKQGADAFLIGEHFMRQESIYNAVKDMKGE</sequence>
<name>TRPC_CAMFF</name>
<proteinExistence type="inferred from homology"/>
<comment type="catalytic activity">
    <reaction evidence="1">
        <text>1-(2-carboxyphenylamino)-1-deoxy-D-ribulose 5-phosphate + H(+) = (1S,2R)-1-C-(indol-3-yl)glycerol 3-phosphate + CO2 + H2O</text>
        <dbReference type="Rhea" id="RHEA:23476"/>
        <dbReference type="ChEBI" id="CHEBI:15377"/>
        <dbReference type="ChEBI" id="CHEBI:15378"/>
        <dbReference type="ChEBI" id="CHEBI:16526"/>
        <dbReference type="ChEBI" id="CHEBI:58613"/>
        <dbReference type="ChEBI" id="CHEBI:58866"/>
        <dbReference type="EC" id="4.1.1.48"/>
    </reaction>
</comment>
<comment type="pathway">
    <text evidence="1">Amino-acid biosynthesis; L-tryptophan biosynthesis; L-tryptophan from chorismate: step 4/5.</text>
</comment>
<comment type="similarity">
    <text evidence="1">Belongs to the TrpC family.</text>
</comment>
<feature type="chain" id="PRO_1000018467" description="Indole-3-glycerol phosphate synthase">
    <location>
        <begin position="1"/>
        <end position="258"/>
    </location>
</feature>
<accession>A0RNN3</accession>
<organism>
    <name type="scientific">Campylobacter fetus subsp. fetus (strain 82-40)</name>
    <dbReference type="NCBI Taxonomy" id="360106"/>
    <lineage>
        <taxon>Bacteria</taxon>
        <taxon>Pseudomonadati</taxon>
        <taxon>Campylobacterota</taxon>
        <taxon>Epsilonproteobacteria</taxon>
        <taxon>Campylobacterales</taxon>
        <taxon>Campylobacteraceae</taxon>
        <taxon>Campylobacter</taxon>
    </lineage>
</organism>
<gene>
    <name evidence="1" type="primary">trpC</name>
    <name type="ordered locus">CFF8240_0640</name>
</gene>
<keyword id="KW-0028">Amino-acid biosynthesis</keyword>
<keyword id="KW-0057">Aromatic amino acid biosynthesis</keyword>
<keyword id="KW-0210">Decarboxylase</keyword>
<keyword id="KW-0456">Lyase</keyword>
<keyword id="KW-0822">Tryptophan biosynthesis</keyword>